<organism>
    <name type="scientific">Chelativorans sp. (strain BNC1)</name>
    <dbReference type="NCBI Taxonomy" id="266779"/>
    <lineage>
        <taxon>Bacteria</taxon>
        <taxon>Pseudomonadati</taxon>
        <taxon>Pseudomonadota</taxon>
        <taxon>Alphaproteobacteria</taxon>
        <taxon>Hyphomicrobiales</taxon>
        <taxon>Phyllobacteriaceae</taxon>
        <taxon>Chelativorans</taxon>
    </lineage>
</organism>
<protein>
    <recommendedName>
        <fullName evidence="1">tRNA (guanine-N(1)-)-methyltransferase</fullName>
        <ecNumber evidence="1">2.1.1.228</ecNumber>
    </recommendedName>
    <alternativeName>
        <fullName evidence="1">M1G-methyltransferase</fullName>
    </alternativeName>
    <alternativeName>
        <fullName evidence="1">tRNA [GM37] methyltransferase</fullName>
    </alternativeName>
</protein>
<reference key="1">
    <citation type="submission" date="2006-06" db="EMBL/GenBank/DDBJ databases">
        <title>Complete sequence of chromosome of Mesorhizobium sp. BNC1.</title>
        <authorList>
            <consortium name="US DOE Joint Genome Institute"/>
            <person name="Copeland A."/>
            <person name="Lucas S."/>
            <person name="Lapidus A."/>
            <person name="Barry K."/>
            <person name="Detter J.C."/>
            <person name="Glavina del Rio T."/>
            <person name="Hammon N."/>
            <person name="Israni S."/>
            <person name="Dalin E."/>
            <person name="Tice H."/>
            <person name="Pitluck S."/>
            <person name="Chertkov O."/>
            <person name="Brettin T."/>
            <person name="Bruce D."/>
            <person name="Han C."/>
            <person name="Tapia R."/>
            <person name="Gilna P."/>
            <person name="Schmutz J."/>
            <person name="Larimer F."/>
            <person name="Land M."/>
            <person name="Hauser L."/>
            <person name="Kyrpides N."/>
            <person name="Mikhailova N."/>
            <person name="Richardson P."/>
        </authorList>
    </citation>
    <scope>NUCLEOTIDE SEQUENCE [LARGE SCALE GENOMIC DNA]</scope>
    <source>
        <strain>BNC1</strain>
    </source>
</reference>
<dbReference type="EC" id="2.1.1.228" evidence="1"/>
<dbReference type="EMBL" id="CP000390">
    <property type="protein sequence ID" value="ABG64815.1"/>
    <property type="molecule type" value="Genomic_DNA"/>
</dbReference>
<dbReference type="SMR" id="Q11CR0"/>
<dbReference type="STRING" id="266779.Meso_3444"/>
<dbReference type="KEGG" id="mes:Meso_3444"/>
<dbReference type="eggNOG" id="COG0336">
    <property type="taxonomic scope" value="Bacteria"/>
</dbReference>
<dbReference type="HOGENOM" id="CLU_047363_0_1_5"/>
<dbReference type="OrthoDB" id="9807416at2"/>
<dbReference type="GO" id="GO:0005829">
    <property type="term" value="C:cytosol"/>
    <property type="evidence" value="ECO:0007669"/>
    <property type="project" value="TreeGrafter"/>
</dbReference>
<dbReference type="GO" id="GO:0052906">
    <property type="term" value="F:tRNA (guanine(37)-N1)-methyltransferase activity"/>
    <property type="evidence" value="ECO:0007669"/>
    <property type="project" value="UniProtKB-UniRule"/>
</dbReference>
<dbReference type="GO" id="GO:0002939">
    <property type="term" value="P:tRNA N1-guanine methylation"/>
    <property type="evidence" value="ECO:0007669"/>
    <property type="project" value="TreeGrafter"/>
</dbReference>
<dbReference type="CDD" id="cd18080">
    <property type="entry name" value="TrmD-like"/>
    <property type="match status" value="1"/>
</dbReference>
<dbReference type="FunFam" id="3.40.1280.10:FF:000001">
    <property type="entry name" value="tRNA (guanine-N(1)-)-methyltransferase"/>
    <property type="match status" value="1"/>
</dbReference>
<dbReference type="Gene3D" id="3.40.1280.10">
    <property type="match status" value="1"/>
</dbReference>
<dbReference type="Gene3D" id="1.10.1270.20">
    <property type="entry name" value="tRNA(m1g37)methyltransferase, domain 2"/>
    <property type="match status" value="1"/>
</dbReference>
<dbReference type="HAMAP" id="MF_00605">
    <property type="entry name" value="TrmD"/>
    <property type="match status" value="1"/>
</dbReference>
<dbReference type="InterPro" id="IPR029028">
    <property type="entry name" value="Alpha/beta_knot_MTases"/>
</dbReference>
<dbReference type="InterPro" id="IPR023148">
    <property type="entry name" value="tRNA_m1G_MeTrfase_C_sf"/>
</dbReference>
<dbReference type="InterPro" id="IPR002649">
    <property type="entry name" value="tRNA_m1G_MeTrfase_TrmD"/>
</dbReference>
<dbReference type="InterPro" id="IPR029026">
    <property type="entry name" value="tRNA_m1G_MTases_N"/>
</dbReference>
<dbReference type="InterPro" id="IPR016009">
    <property type="entry name" value="tRNA_MeTrfase_TRMD/TRM10"/>
</dbReference>
<dbReference type="NCBIfam" id="NF000648">
    <property type="entry name" value="PRK00026.1"/>
    <property type="match status" value="1"/>
</dbReference>
<dbReference type="NCBIfam" id="TIGR00088">
    <property type="entry name" value="trmD"/>
    <property type="match status" value="1"/>
</dbReference>
<dbReference type="PANTHER" id="PTHR46417">
    <property type="entry name" value="TRNA (GUANINE-N(1)-)-METHYLTRANSFERASE"/>
    <property type="match status" value="1"/>
</dbReference>
<dbReference type="PANTHER" id="PTHR46417:SF1">
    <property type="entry name" value="TRNA (GUANINE-N(1)-)-METHYLTRANSFERASE"/>
    <property type="match status" value="1"/>
</dbReference>
<dbReference type="Pfam" id="PF01746">
    <property type="entry name" value="tRNA_m1G_MT"/>
    <property type="match status" value="1"/>
</dbReference>
<dbReference type="PIRSF" id="PIRSF000386">
    <property type="entry name" value="tRNA_mtase"/>
    <property type="match status" value="1"/>
</dbReference>
<dbReference type="SUPFAM" id="SSF75217">
    <property type="entry name" value="alpha/beta knot"/>
    <property type="match status" value="1"/>
</dbReference>
<proteinExistence type="inferred from homology"/>
<evidence type="ECO:0000255" key="1">
    <source>
        <dbReference type="HAMAP-Rule" id="MF_00605"/>
    </source>
</evidence>
<keyword id="KW-0963">Cytoplasm</keyword>
<keyword id="KW-0489">Methyltransferase</keyword>
<keyword id="KW-0949">S-adenosyl-L-methionine</keyword>
<keyword id="KW-0808">Transferase</keyword>
<keyword id="KW-0819">tRNA processing</keyword>
<name>TRMD_CHESB</name>
<accession>Q11CR0</accession>
<gene>
    <name evidence="1" type="primary">trmD</name>
    <name type="ordered locus">Meso_3444</name>
</gene>
<comment type="function">
    <text evidence="1">Specifically methylates guanosine-37 in various tRNAs.</text>
</comment>
<comment type="catalytic activity">
    <reaction evidence="1">
        <text>guanosine(37) in tRNA + S-adenosyl-L-methionine = N(1)-methylguanosine(37) in tRNA + S-adenosyl-L-homocysteine + H(+)</text>
        <dbReference type="Rhea" id="RHEA:36899"/>
        <dbReference type="Rhea" id="RHEA-COMP:10145"/>
        <dbReference type="Rhea" id="RHEA-COMP:10147"/>
        <dbReference type="ChEBI" id="CHEBI:15378"/>
        <dbReference type="ChEBI" id="CHEBI:57856"/>
        <dbReference type="ChEBI" id="CHEBI:59789"/>
        <dbReference type="ChEBI" id="CHEBI:73542"/>
        <dbReference type="ChEBI" id="CHEBI:74269"/>
        <dbReference type="EC" id="2.1.1.228"/>
    </reaction>
</comment>
<comment type="subunit">
    <text evidence="1">Homodimer.</text>
</comment>
<comment type="subcellular location">
    <subcellularLocation>
        <location evidence="1">Cytoplasm</location>
    </subcellularLocation>
</comment>
<comment type="similarity">
    <text evidence="1">Belongs to the RNA methyltransferase TrmD family.</text>
</comment>
<feature type="chain" id="PRO_0000257430" description="tRNA (guanine-N(1)-)-methyltransferase">
    <location>
        <begin position="1"/>
        <end position="235"/>
    </location>
</feature>
<feature type="binding site" evidence="1">
    <location>
        <position position="114"/>
    </location>
    <ligand>
        <name>S-adenosyl-L-methionine</name>
        <dbReference type="ChEBI" id="CHEBI:59789"/>
    </ligand>
</feature>
<feature type="binding site" evidence="1">
    <location>
        <begin position="134"/>
        <end position="139"/>
    </location>
    <ligand>
        <name>S-adenosyl-L-methionine</name>
        <dbReference type="ChEBI" id="CHEBI:59789"/>
    </ligand>
</feature>
<sequence length="235" mass="25622">MTFRATVLTLYPEMFPGPLDISLAGRARSAGTWSLETVQIRDFATDKHRSVDDTPAGGGAGMVMRADVLARAIDHASPEEDARPRLLMSPRGKPLTQSFVRELATGPGAVIVCGRFEGVDQRVIEARCLLEVSVGDYILSGGEPAAIVLLDAVVRLLPGVMGNESSGAEESFESGLLEHPQYTRPQTFEGREIPEVLTSGNHRKIAEWRSAEAEQLTRERRPDLWLGYHRAKGGT</sequence>